<accession>A4SGE1</accession>
<name>RUVA_CHLPM</name>
<comment type="function">
    <text evidence="1">The RuvA-RuvB-RuvC complex processes Holliday junction (HJ) DNA during genetic recombination and DNA repair, while the RuvA-RuvB complex plays an important role in the rescue of blocked DNA replication forks via replication fork reversal (RFR). RuvA specifically binds to HJ cruciform DNA, conferring on it an open structure. The RuvB hexamer acts as an ATP-dependent pump, pulling dsDNA into and through the RuvAB complex. HJ branch migration allows RuvC to scan DNA until it finds its consensus sequence, where it cleaves and resolves the cruciform DNA.</text>
</comment>
<comment type="subunit">
    <text evidence="1">Homotetramer. Forms an RuvA(8)-RuvB(12)-Holliday junction (HJ) complex. HJ DNA is sandwiched between 2 RuvA tetramers; dsDNA enters through RuvA and exits via RuvB. An RuvB hexamer assembles on each DNA strand where it exits the tetramer. Each RuvB hexamer is contacted by two RuvA subunits (via domain III) on 2 adjacent RuvB subunits; this complex drives branch migration. In the full resolvosome a probable DNA-RuvA(4)-RuvB(12)-RuvC(2) complex forms which resolves the HJ.</text>
</comment>
<comment type="subcellular location">
    <subcellularLocation>
        <location evidence="1">Cytoplasm</location>
    </subcellularLocation>
</comment>
<comment type="domain">
    <text evidence="1">Has three domains with a flexible linker between the domains II and III and assumes an 'L' shape. Domain III is highly mobile and contacts RuvB.</text>
</comment>
<comment type="similarity">
    <text evidence="1">Belongs to the RuvA family.</text>
</comment>
<keyword id="KW-0963">Cytoplasm</keyword>
<keyword id="KW-0227">DNA damage</keyword>
<keyword id="KW-0233">DNA recombination</keyword>
<keyword id="KW-0234">DNA repair</keyword>
<keyword id="KW-0238">DNA-binding</keyword>
<protein>
    <recommendedName>
        <fullName evidence="1">Holliday junction branch migration complex subunit RuvA</fullName>
    </recommendedName>
</protein>
<organism>
    <name type="scientific">Chlorobium phaeovibrioides (strain DSM 265 / 1930)</name>
    <name type="common">Prosthecochloris vibrioformis (strain DSM 265)</name>
    <dbReference type="NCBI Taxonomy" id="290318"/>
    <lineage>
        <taxon>Bacteria</taxon>
        <taxon>Pseudomonadati</taxon>
        <taxon>Chlorobiota</taxon>
        <taxon>Chlorobiia</taxon>
        <taxon>Chlorobiales</taxon>
        <taxon>Chlorobiaceae</taxon>
        <taxon>Chlorobium/Pelodictyon group</taxon>
        <taxon>Chlorobium</taxon>
    </lineage>
</organism>
<sequence>MYAYFRGRLVSCLPEEAVLEVSGIAYRFLVSAGTARQLPEVGTETILYTHLSVREDALQLYGFATEEEKQLFRLLLLTSGVGPKLALAVLSGMAVPEVHEAILANAPERLFGITGVGRKTAARIILELRDKILKLAPVGSAVASVAADRGGFREDAVNALMTLGFPRPVANQAVGCALEPEPDASLEVVIKRALATMHNR</sequence>
<proteinExistence type="inferred from homology"/>
<evidence type="ECO:0000255" key="1">
    <source>
        <dbReference type="HAMAP-Rule" id="MF_00031"/>
    </source>
</evidence>
<gene>
    <name evidence="1" type="primary">ruvA</name>
    <name type="ordered locus">Cvib_1539</name>
</gene>
<dbReference type="EMBL" id="CP000607">
    <property type="protein sequence ID" value="ABP37550.1"/>
    <property type="molecule type" value="Genomic_DNA"/>
</dbReference>
<dbReference type="SMR" id="A4SGE1"/>
<dbReference type="STRING" id="290318.Cvib_1539"/>
<dbReference type="KEGG" id="pvi:Cvib_1539"/>
<dbReference type="eggNOG" id="COG0632">
    <property type="taxonomic scope" value="Bacteria"/>
</dbReference>
<dbReference type="HOGENOM" id="CLU_087936_3_0_10"/>
<dbReference type="OrthoDB" id="5293449at2"/>
<dbReference type="GO" id="GO:0005737">
    <property type="term" value="C:cytoplasm"/>
    <property type="evidence" value="ECO:0007669"/>
    <property type="project" value="UniProtKB-SubCell"/>
</dbReference>
<dbReference type="GO" id="GO:0009379">
    <property type="term" value="C:Holliday junction helicase complex"/>
    <property type="evidence" value="ECO:0007669"/>
    <property type="project" value="InterPro"/>
</dbReference>
<dbReference type="GO" id="GO:0048476">
    <property type="term" value="C:Holliday junction resolvase complex"/>
    <property type="evidence" value="ECO:0007669"/>
    <property type="project" value="UniProtKB-UniRule"/>
</dbReference>
<dbReference type="GO" id="GO:0005524">
    <property type="term" value="F:ATP binding"/>
    <property type="evidence" value="ECO:0007669"/>
    <property type="project" value="InterPro"/>
</dbReference>
<dbReference type="GO" id="GO:0000400">
    <property type="term" value="F:four-way junction DNA binding"/>
    <property type="evidence" value="ECO:0007669"/>
    <property type="project" value="UniProtKB-UniRule"/>
</dbReference>
<dbReference type="GO" id="GO:0009378">
    <property type="term" value="F:four-way junction helicase activity"/>
    <property type="evidence" value="ECO:0007669"/>
    <property type="project" value="InterPro"/>
</dbReference>
<dbReference type="GO" id="GO:0006310">
    <property type="term" value="P:DNA recombination"/>
    <property type="evidence" value="ECO:0007669"/>
    <property type="project" value="UniProtKB-UniRule"/>
</dbReference>
<dbReference type="GO" id="GO:0006281">
    <property type="term" value="P:DNA repair"/>
    <property type="evidence" value="ECO:0007669"/>
    <property type="project" value="UniProtKB-UniRule"/>
</dbReference>
<dbReference type="CDD" id="cd14332">
    <property type="entry name" value="UBA_RuvA_C"/>
    <property type="match status" value="1"/>
</dbReference>
<dbReference type="Gene3D" id="1.10.150.20">
    <property type="entry name" value="5' to 3' exonuclease, C-terminal subdomain"/>
    <property type="match status" value="1"/>
</dbReference>
<dbReference type="Gene3D" id="1.10.8.10">
    <property type="entry name" value="DNA helicase RuvA subunit, C-terminal domain"/>
    <property type="match status" value="1"/>
</dbReference>
<dbReference type="Gene3D" id="2.40.50.140">
    <property type="entry name" value="Nucleic acid-binding proteins"/>
    <property type="match status" value="1"/>
</dbReference>
<dbReference type="HAMAP" id="MF_00031">
    <property type="entry name" value="DNA_HJ_migration_RuvA"/>
    <property type="match status" value="1"/>
</dbReference>
<dbReference type="InterPro" id="IPR013849">
    <property type="entry name" value="DNA_helicase_Holl-junc_RuvA_I"/>
</dbReference>
<dbReference type="InterPro" id="IPR012340">
    <property type="entry name" value="NA-bd_OB-fold"/>
</dbReference>
<dbReference type="InterPro" id="IPR000085">
    <property type="entry name" value="RuvA"/>
</dbReference>
<dbReference type="InterPro" id="IPR010994">
    <property type="entry name" value="RuvA_2-like"/>
</dbReference>
<dbReference type="InterPro" id="IPR011114">
    <property type="entry name" value="RuvA_C"/>
</dbReference>
<dbReference type="InterPro" id="IPR036267">
    <property type="entry name" value="RuvA_C_sf"/>
</dbReference>
<dbReference type="NCBIfam" id="TIGR00084">
    <property type="entry name" value="ruvA"/>
    <property type="match status" value="1"/>
</dbReference>
<dbReference type="Pfam" id="PF14520">
    <property type="entry name" value="HHH_5"/>
    <property type="match status" value="1"/>
</dbReference>
<dbReference type="Pfam" id="PF07499">
    <property type="entry name" value="RuvA_C"/>
    <property type="match status" value="1"/>
</dbReference>
<dbReference type="Pfam" id="PF01330">
    <property type="entry name" value="RuvA_N"/>
    <property type="match status" value="1"/>
</dbReference>
<dbReference type="SUPFAM" id="SSF46929">
    <property type="entry name" value="DNA helicase RuvA subunit, C-terminal domain"/>
    <property type="match status" value="1"/>
</dbReference>
<dbReference type="SUPFAM" id="SSF50249">
    <property type="entry name" value="Nucleic acid-binding proteins"/>
    <property type="match status" value="1"/>
</dbReference>
<dbReference type="SUPFAM" id="SSF47781">
    <property type="entry name" value="RuvA domain 2-like"/>
    <property type="match status" value="1"/>
</dbReference>
<reference key="1">
    <citation type="submission" date="2007-03" db="EMBL/GenBank/DDBJ databases">
        <title>Complete sequence of Prosthecochloris vibrioformis DSM 265.</title>
        <authorList>
            <consortium name="US DOE Joint Genome Institute"/>
            <person name="Copeland A."/>
            <person name="Lucas S."/>
            <person name="Lapidus A."/>
            <person name="Barry K."/>
            <person name="Detter J.C."/>
            <person name="Glavina del Rio T."/>
            <person name="Hammon N."/>
            <person name="Israni S."/>
            <person name="Pitluck S."/>
            <person name="Schmutz J."/>
            <person name="Larimer F."/>
            <person name="Land M."/>
            <person name="Hauser L."/>
            <person name="Mikhailova N."/>
            <person name="Li T."/>
            <person name="Overmann J."/>
            <person name="Schuster S.C."/>
            <person name="Bryant D.A."/>
            <person name="Richardson P."/>
        </authorList>
    </citation>
    <scope>NUCLEOTIDE SEQUENCE [LARGE SCALE GENOMIC DNA]</scope>
    <source>
        <strain>DSM 265 / 1930</strain>
    </source>
</reference>
<feature type="chain" id="PRO_1000074429" description="Holliday junction branch migration complex subunit RuvA">
    <location>
        <begin position="1"/>
        <end position="200"/>
    </location>
</feature>
<feature type="region of interest" description="Domain I" evidence="1">
    <location>
        <begin position="1"/>
        <end position="64"/>
    </location>
</feature>
<feature type="region of interest" description="Domain II" evidence="1">
    <location>
        <begin position="65"/>
        <end position="143"/>
    </location>
</feature>
<feature type="region of interest" description="Flexible linker" evidence="1">
    <location>
        <begin position="144"/>
        <end position="154"/>
    </location>
</feature>
<feature type="region of interest" description="Domain III" evidence="1">
    <location>
        <begin position="154"/>
        <end position="200"/>
    </location>
</feature>